<keyword id="KW-0028">Amino-acid biosynthesis</keyword>
<keyword id="KW-0057">Aromatic amino acid biosynthesis</keyword>
<keyword id="KW-0067">ATP-binding</keyword>
<keyword id="KW-0963">Cytoplasm</keyword>
<keyword id="KW-0418">Kinase</keyword>
<keyword id="KW-0456">Lyase</keyword>
<keyword id="KW-0479">Metal-binding</keyword>
<keyword id="KW-0511">Multifunctional enzyme</keyword>
<keyword id="KW-0521">NADP</keyword>
<keyword id="KW-0547">Nucleotide-binding</keyword>
<keyword id="KW-0560">Oxidoreductase</keyword>
<keyword id="KW-0808">Transferase</keyword>
<keyword id="KW-0862">Zinc</keyword>
<accession>B9WFG1</accession>
<evidence type="ECO:0000255" key="1">
    <source>
        <dbReference type="HAMAP-Rule" id="MF_03143"/>
    </source>
</evidence>
<organism>
    <name type="scientific">Candida dubliniensis (strain CD36 / ATCC MYA-646 / CBS 7987 / NCPF 3949 / NRRL Y-17841)</name>
    <name type="common">Yeast</name>
    <dbReference type="NCBI Taxonomy" id="573826"/>
    <lineage>
        <taxon>Eukaryota</taxon>
        <taxon>Fungi</taxon>
        <taxon>Dikarya</taxon>
        <taxon>Ascomycota</taxon>
        <taxon>Saccharomycotina</taxon>
        <taxon>Pichiomycetes</taxon>
        <taxon>Debaryomycetaceae</taxon>
        <taxon>Candida/Lodderomyces clade</taxon>
        <taxon>Candida</taxon>
    </lineage>
</organism>
<proteinExistence type="inferred from homology"/>
<comment type="function">
    <text evidence="1">The AROM polypeptide catalyzes 5 consecutive enzymatic reactions in prechorismate polyaromatic amino acid biosynthesis.</text>
</comment>
<comment type="catalytic activity">
    <reaction evidence="1">
        <text>7-phospho-2-dehydro-3-deoxy-D-arabino-heptonate = 3-dehydroquinate + phosphate</text>
        <dbReference type="Rhea" id="RHEA:21968"/>
        <dbReference type="ChEBI" id="CHEBI:32364"/>
        <dbReference type="ChEBI" id="CHEBI:43474"/>
        <dbReference type="ChEBI" id="CHEBI:58394"/>
        <dbReference type="EC" id="4.2.3.4"/>
    </reaction>
</comment>
<comment type="catalytic activity">
    <reaction evidence="1">
        <text>3-dehydroquinate = 3-dehydroshikimate + H2O</text>
        <dbReference type="Rhea" id="RHEA:21096"/>
        <dbReference type="ChEBI" id="CHEBI:15377"/>
        <dbReference type="ChEBI" id="CHEBI:16630"/>
        <dbReference type="ChEBI" id="CHEBI:32364"/>
        <dbReference type="EC" id="4.2.1.10"/>
    </reaction>
</comment>
<comment type="catalytic activity">
    <reaction evidence="1">
        <text>shikimate + NADP(+) = 3-dehydroshikimate + NADPH + H(+)</text>
        <dbReference type="Rhea" id="RHEA:17737"/>
        <dbReference type="ChEBI" id="CHEBI:15378"/>
        <dbReference type="ChEBI" id="CHEBI:16630"/>
        <dbReference type="ChEBI" id="CHEBI:36208"/>
        <dbReference type="ChEBI" id="CHEBI:57783"/>
        <dbReference type="ChEBI" id="CHEBI:58349"/>
        <dbReference type="EC" id="1.1.1.25"/>
    </reaction>
</comment>
<comment type="catalytic activity">
    <reaction evidence="1">
        <text>shikimate + ATP = 3-phosphoshikimate + ADP + H(+)</text>
        <dbReference type="Rhea" id="RHEA:13121"/>
        <dbReference type="ChEBI" id="CHEBI:15378"/>
        <dbReference type="ChEBI" id="CHEBI:30616"/>
        <dbReference type="ChEBI" id="CHEBI:36208"/>
        <dbReference type="ChEBI" id="CHEBI:145989"/>
        <dbReference type="ChEBI" id="CHEBI:456216"/>
        <dbReference type="EC" id="2.7.1.71"/>
    </reaction>
</comment>
<comment type="catalytic activity">
    <reaction evidence="1">
        <text>3-phosphoshikimate + phosphoenolpyruvate = 5-O-(1-carboxyvinyl)-3-phosphoshikimate + phosphate</text>
        <dbReference type="Rhea" id="RHEA:21256"/>
        <dbReference type="ChEBI" id="CHEBI:43474"/>
        <dbReference type="ChEBI" id="CHEBI:57701"/>
        <dbReference type="ChEBI" id="CHEBI:58702"/>
        <dbReference type="ChEBI" id="CHEBI:145989"/>
        <dbReference type="EC" id="2.5.1.19"/>
    </reaction>
</comment>
<comment type="cofactor">
    <cofactor>
        <name>Zn(2+)</name>
        <dbReference type="ChEBI" id="CHEBI:29105"/>
    </cofactor>
    <text>Binds 2 Zn(2+) ions per subunit.</text>
</comment>
<comment type="pathway">
    <text evidence="1">Metabolic intermediate biosynthesis; chorismate biosynthesis; chorismate from D-erythrose 4-phosphate and phosphoenolpyruvate: step 2/7.</text>
</comment>
<comment type="pathway">
    <text evidence="1">Metabolic intermediate biosynthesis; chorismate biosynthesis; chorismate from D-erythrose 4-phosphate and phosphoenolpyruvate: step 3/7.</text>
</comment>
<comment type="pathway">
    <text evidence="1">Metabolic intermediate biosynthesis; chorismate biosynthesis; chorismate from D-erythrose 4-phosphate and phosphoenolpyruvate: step 4/7.</text>
</comment>
<comment type="pathway">
    <text evidence="1">Metabolic intermediate biosynthesis; chorismate biosynthesis; chorismate from D-erythrose 4-phosphate and phosphoenolpyruvate: step 5/7.</text>
</comment>
<comment type="pathway">
    <text evidence="1">Metabolic intermediate biosynthesis; chorismate biosynthesis; chorismate from D-erythrose 4-phosphate and phosphoenolpyruvate: step 6/7.</text>
</comment>
<comment type="subunit">
    <text evidence="1">Homodimer.</text>
</comment>
<comment type="subcellular location">
    <subcellularLocation>
        <location evidence="1">Cytoplasm</location>
    </subcellularLocation>
</comment>
<comment type="similarity">
    <text evidence="1">In the N-terminal section; belongs to the sugar phosphate cyclases superfamily. Dehydroquinate synthase family.</text>
</comment>
<comment type="similarity">
    <text evidence="1">In the 2nd section; belongs to the EPSP synthase family.</text>
</comment>
<comment type="similarity">
    <text evidence="1">In the 3rd section; belongs to the shikimate kinase family.</text>
</comment>
<comment type="similarity">
    <text evidence="1">In the 4th section; belongs to the type-I 3-dehydroquinase family.</text>
</comment>
<comment type="similarity">
    <text evidence="1">In the C-terminal section; belongs to the shikimate dehydrogenase family.</text>
</comment>
<name>ARO1_CANDC</name>
<dbReference type="EC" id="4.2.3.4" evidence="1"/>
<dbReference type="EC" id="2.5.1.19" evidence="1"/>
<dbReference type="EC" id="2.7.1.71" evidence="1"/>
<dbReference type="EC" id="4.2.1.10" evidence="1"/>
<dbReference type="EC" id="1.1.1.25" evidence="1"/>
<dbReference type="EMBL" id="FM992691">
    <property type="protein sequence ID" value="CAX41980.1"/>
    <property type="molecule type" value="Genomic_DNA"/>
</dbReference>
<dbReference type="RefSeq" id="XP_002419765.1">
    <property type="nucleotide sequence ID" value="XM_002419720.1"/>
</dbReference>
<dbReference type="SMR" id="B9WFG1"/>
<dbReference type="GeneID" id="8047368"/>
<dbReference type="KEGG" id="cdu:CD36_40930"/>
<dbReference type="CGD" id="CAL0000166721">
    <property type="gene designation" value="Cd36_40930"/>
</dbReference>
<dbReference type="VEuPathDB" id="FungiDB:CD36_40930"/>
<dbReference type="eggNOG" id="KOG0692">
    <property type="taxonomic scope" value="Eukaryota"/>
</dbReference>
<dbReference type="HOGENOM" id="CLU_001201_1_2_1"/>
<dbReference type="OrthoDB" id="197068at2759"/>
<dbReference type="UniPathway" id="UPA00053">
    <property type="reaction ID" value="UER00085"/>
</dbReference>
<dbReference type="UniPathway" id="UPA00053">
    <property type="reaction ID" value="UER00086"/>
</dbReference>
<dbReference type="UniPathway" id="UPA00053">
    <property type="reaction ID" value="UER00087"/>
</dbReference>
<dbReference type="UniPathway" id="UPA00053">
    <property type="reaction ID" value="UER00088"/>
</dbReference>
<dbReference type="UniPathway" id="UPA00053">
    <property type="reaction ID" value="UER00089"/>
</dbReference>
<dbReference type="Proteomes" id="UP000002605">
    <property type="component" value="Chromosome 4"/>
</dbReference>
<dbReference type="GO" id="GO:0005737">
    <property type="term" value="C:cytoplasm"/>
    <property type="evidence" value="ECO:0007669"/>
    <property type="project" value="UniProtKB-SubCell"/>
</dbReference>
<dbReference type="GO" id="GO:0003855">
    <property type="term" value="F:3-dehydroquinate dehydratase activity"/>
    <property type="evidence" value="ECO:0007669"/>
    <property type="project" value="UniProtKB-UniRule"/>
</dbReference>
<dbReference type="GO" id="GO:0003856">
    <property type="term" value="F:3-dehydroquinate synthase activity"/>
    <property type="evidence" value="ECO:0007669"/>
    <property type="project" value="UniProtKB-UniRule"/>
</dbReference>
<dbReference type="GO" id="GO:0003866">
    <property type="term" value="F:3-phosphoshikimate 1-carboxyvinyltransferase activity"/>
    <property type="evidence" value="ECO:0007669"/>
    <property type="project" value="UniProtKB-UniRule"/>
</dbReference>
<dbReference type="GO" id="GO:0005524">
    <property type="term" value="F:ATP binding"/>
    <property type="evidence" value="ECO:0007669"/>
    <property type="project" value="UniProtKB-UniRule"/>
</dbReference>
<dbReference type="GO" id="GO:0046872">
    <property type="term" value="F:metal ion binding"/>
    <property type="evidence" value="ECO:0007669"/>
    <property type="project" value="UniProtKB-UniRule"/>
</dbReference>
<dbReference type="GO" id="GO:0004764">
    <property type="term" value="F:shikimate 3-dehydrogenase (NADP+) activity"/>
    <property type="evidence" value="ECO:0007669"/>
    <property type="project" value="UniProtKB-UniRule"/>
</dbReference>
<dbReference type="GO" id="GO:0004765">
    <property type="term" value="F:shikimate kinase activity"/>
    <property type="evidence" value="ECO:0007669"/>
    <property type="project" value="UniProtKB-UniRule"/>
</dbReference>
<dbReference type="GO" id="GO:0008652">
    <property type="term" value="P:amino acid biosynthetic process"/>
    <property type="evidence" value="ECO:0007669"/>
    <property type="project" value="UniProtKB-KW"/>
</dbReference>
<dbReference type="GO" id="GO:0009073">
    <property type="term" value="P:aromatic amino acid family biosynthetic process"/>
    <property type="evidence" value="ECO:0007669"/>
    <property type="project" value="UniProtKB-UniRule"/>
</dbReference>
<dbReference type="GO" id="GO:0009423">
    <property type="term" value="P:chorismate biosynthetic process"/>
    <property type="evidence" value="ECO:0007669"/>
    <property type="project" value="UniProtKB-UniRule"/>
</dbReference>
<dbReference type="CDD" id="cd00502">
    <property type="entry name" value="DHQase_I"/>
    <property type="match status" value="1"/>
</dbReference>
<dbReference type="CDD" id="cd08195">
    <property type="entry name" value="DHQS"/>
    <property type="match status" value="1"/>
</dbReference>
<dbReference type="CDD" id="cd01556">
    <property type="entry name" value="EPSP_synthase"/>
    <property type="match status" value="1"/>
</dbReference>
<dbReference type="CDD" id="cd01065">
    <property type="entry name" value="NAD_bind_Shikimate_DH"/>
    <property type="match status" value="1"/>
</dbReference>
<dbReference type="CDD" id="cd00464">
    <property type="entry name" value="SK"/>
    <property type="match status" value="1"/>
</dbReference>
<dbReference type="FunFam" id="1.20.1090.10:FF:000007">
    <property type="entry name" value="Pentafunctional AROM polypeptide"/>
    <property type="match status" value="1"/>
</dbReference>
<dbReference type="FunFam" id="3.20.20.70:FF:000135">
    <property type="entry name" value="Pentafunctional AROM polypeptide"/>
    <property type="match status" value="1"/>
</dbReference>
<dbReference type="FunFam" id="3.40.50.1970:FF:000007">
    <property type="entry name" value="Pentafunctional AROM polypeptide"/>
    <property type="match status" value="1"/>
</dbReference>
<dbReference type="FunFam" id="3.40.50.300:FF:001256">
    <property type="entry name" value="Pentafunctional AROM polypeptide"/>
    <property type="match status" value="1"/>
</dbReference>
<dbReference type="FunFam" id="3.40.50.720:FF:000484">
    <property type="entry name" value="Pentafunctional AROM polypeptide"/>
    <property type="match status" value="1"/>
</dbReference>
<dbReference type="FunFam" id="3.65.10.10:FF:000007">
    <property type="entry name" value="Pentafunctional AROM polypeptide"/>
    <property type="match status" value="1"/>
</dbReference>
<dbReference type="FunFam" id="3.65.10.10:FF:000008">
    <property type="entry name" value="Pentafunctional AROM polypeptide"/>
    <property type="match status" value="1"/>
</dbReference>
<dbReference type="Gene3D" id="3.40.50.1970">
    <property type="match status" value="1"/>
</dbReference>
<dbReference type="Gene3D" id="3.20.20.70">
    <property type="entry name" value="Aldolase class I"/>
    <property type="match status" value="1"/>
</dbReference>
<dbReference type="Gene3D" id="1.20.1090.10">
    <property type="entry name" value="Dehydroquinate synthase-like - alpha domain"/>
    <property type="match status" value="1"/>
</dbReference>
<dbReference type="Gene3D" id="3.65.10.10">
    <property type="entry name" value="Enolpyruvate transferase domain"/>
    <property type="match status" value="2"/>
</dbReference>
<dbReference type="Gene3D" id="3.40.50.10860">
    <property type="entry name" value="Leucine Dehydrogenase, chain A, domain 1"/>
    <property type="match status" value="1"/>
</dbReference>
<dbReference type="Gene3D" id="3.40.50.720">
    <property type="entry name" value="NAD(P)-binding Rossmann-like Domain"/>
    <property type="match status" value="1"/>
</dbReference>
<dbReference type="Gene3D" id="3.40.50.300">
    <property type="entry name" value="P-loop containing nucleotide triphosphate hydrolases"/>
    <property type="match status" value="1"/>
</dbReference>
<dbReference type="HAMAP" id="MF_00210">
    <property type="entry name" value="EPSP_synth"/>
    <property type="match status" value="1"/>
</dbReference>
<dbReference type="HAMAP" id="MF_03143">
    <property type="entry name" value="Pentafunct_AroM"/>
    <property type="match status" value="1"/>
</dbReference>
<dbReference type="HAMAP" id="MF_00109">
    <property type="entry name" value="Shikimate_kinase"/>
    <property type="match status" value="1"/>
</dbReference>
<dbReference type="InterPro" id="IPR013785">
    <property type="entry name" value="Aldolase_TIM"/>
</dbReference>
<dbReference type="InterPro" id="IPR046346">
    <property type="entry name" value="Aminoacid_DH-like_N_sf"/>
</dbReference>
<dbReference type="InterPro" id="IPR016037">
    <property type="entry name" value="DHQ_synth_AroB"/>
</dbReference>
<dbReference type="InterPro" id="IPR030960">
    <property type="entry name" value="DHQS/DOIS_N"/>
</dbReference>
<dbReference type="InterPro" id="IPR056179">
    <property type="entry name" value="DHQS_C"/>
</dbReference>
<dbReference type="InterPro" id="IPR001381">
    <property type="entry name" value="DHquinase_I"/>
</dbReference>
<dbReference type="InterPro" id="IPR001986">
    <property type="entry name" value="Enolpyruvate_Tfrase_dom"/>
</dbReference>
<dbReference type="InterPro" id="IPR036968">
    <property type="entry name" value="Enolpyruvate_Tfrase_sf"/>
</dbReference>
<dbReference type="InterPro" id="IPR006264">
    <property type="entry name" value="EPSP_synthase"/>
</dbReference>
<dbReference type="InterPro" id="IPR023193">
    <property type="entry name" value="EPSP_synthase_CS"/>
</dbReference>
<dbReference type="InterPro" id="IPR036291">
    <property type="entry name" value="NAD(P)-bd_dom_sf"/>
</dbReference>
<dbReference type="InterPro" id="IPR027417">
    <property type="entry name" value="P-loop_NTPase"/>
</dbReference>
<dbReference type="InterPro" id="IPR008289">
    <property type="entry name" value="Pentafunct_AroM"/>
</dbReference>
<dbReference type="InterPro" id="IPR013792">
    <property type="entry name" value="RNA3'P_cycl/enolpyr_Trfase_a/b"/>
</dbReference>
<dbReference type="InterPro" id="IPR041121">
    <property type="entry name" value="SDH_C"/>
</dbReference>
<dbReference type="InterPro" id="IPR031322">
    <property type="entry name" value="Shikimate/glucono_kinase"/>
</dbReference>
<dbReference type="InterPro" id="IPR013708">
    <property type="entry name" value="Shikimate_DH-bd_N"/>
</dbReference>
<dbReference type="InterPro" id="IPR010110">
    <property type="entry name" value="Shikimate_DH_AroM-type"/>
</dbReference>
<dbReference type="InterPro" id="IPR000623">
    <property type="entry name" value="Shikimate_kinase/TSH1"/>
</dbReference>
<dbReference type="InterPro" id="IPR006151">
    <property type="entry name" value="Shikm_DH/Glu-tRNA_Rdtase"/>
</dbReference>
<dbReference type="NCBIfam" id="TIGR01356">
    <property type="entry name" value="aroA"/>
    <property type="match status" value="1"/>
</dbReference>
<dbReference type="NCBIfam" id="TIGR01357">
    <property type="entry name" value="aroB"/>
    <property type="match status" value="1"/>
</dbReference>
<dbReference type="NCBIfam" id="TIGR01093">
    <property type="entry name" value="aroD"/>
    <property type="match status" value="1"/>
</dbReference>
<dbReference type="NCBIfam" id="TIGR01809">
    <property type="entry name" value="Shik-DH-AROM"/>
    <property type="match status" value="1"/>
</dbReference>
<dbReference type="PANTHER" id="PTHR21090">
    <property type="entry name" value="AROM/DEHYDROQUINATE SYNTHASE"/>
    <property type="match status" value="1"/>
</dbReference>
<dbReference type="PANTHER" id="PTHR21090:SF5">
    <property type="entry name" value="PENTAFUNCTIONAL AROM POLYPEPTIDE"/>
    <property type="match status" value="1"/>
</dbReference>
<dbReference type="Pfam" id="PF01761">
    <property type="entry name" value="DHQ_synthase"/>
    <property type="match status" value="1"/>
</dbReference>
<dbReference type="Pfam" id="PF24621">
    <property type="entry name" value="DHQS_C"/>
    <property type="match status" value="1"/>
</dbReference>
<dbReference type="Pfam" id="PF01487">
    <property type="entry name" value="DHquinase_I"/>
    <property type="match status" value="1"/>
</dbReference>
<dbReference type="Pfam" id="PF00275">
    <property type="entry name" value="EPSP_synthase"/>
    <property type="match status" value="1"/>
</dbReference>
<dbReference type="Pfam" id="PF18317">
    <property type="entry name" value="SDH_C"/>
    <property type="match status" value="1"/>
</dbReference>
<dbReference type="Pfam" id="PF01488">
    <property type="entry name" value="Shikimate_DH"/>
    <property type="match status" value="1"/>
</dbReference>
<dbReference type="Pfam" id="PF08501">
    <property type="entry name" value="Shikimate_dh_N"/>
    <property type="match status" value="1"/>
</dbReference>
<dbReference type="Pfam" id="PF01202">
    <property type="entry name" value="SKI"/>
    <property type="match status" value="1"/>
</dbReference>
<dbReference type="PIRSF" id="PIRSF000514">
    <property type="entry name" value="Pentafunct_AroM"/>
    <property type="match status" value="1"/>
</dbReference>
<dbReference type="PRINTS" id="PR01100">
    <property type="entry name" value="SHIKIMTKNASE"/>
</dbReference>
<dbReference type="SUPFAM" id="SSF51569">
    <property type="entry name" value="Aldolase"/>
    <property type="match status" value="1"/>
</dbReference>
<dbReference type="SUPFAM" id="SSF53223">
    <property type="entry name" value="Aminoacid dehydrogenase-like, N-terminal domain"/>
    <property type="match status" value="1"/>
</dbReference>
<dbReference type="SUPFAM" id="SSF56796">
    <property type="entry name" value="Dehydroquinate synthase-like"/>
    <property type="match status" value="1"/>
</dbReference>
<dbReference type="SUPFAM" id="SSF55205">
    <property type="entry name" value="EPT/RTPC-like"/>
    <property type="match status" value="1"/>
</dbReference>
<dbReference type="SUPFAM" id="SSF51735">
    <property type="entry name" value="NAD(P)-binding Rossmann-fold domains"/>
    <property type="match status" value="1"/>
</dbReference>
<dbReference type="SUPFAM" id="SSF52540">
    <property type="entry name" value="P-loop containing nucleoside triphosphate hydrolases"/>
    <property type="match status" value="1"/>
</dbReference>
<dbReference type="PROSITE" id="PS00104">
    <property type="entry name" value="EPSP_SYNTHASE_1"/>
    <property type="match status" value="1"/>
</dbReference>
<dbReference type="PROSITE" id="PS00885">
    <property type="entry name" value="EPSP_SYNTHASE_2"/>
    <property type="match status" value="1"/>
</dbReference>
<feature type="chain" id="PRO_0000406710" description="Pentafunctional AROM polypeptide">
    <location>
        <begin position="1"/>
        <end position="1550"/>
    </location>
</feature>
<feature type="region of interest" description="3-dehydroquinate synthase">
    <location>
        <begin position="1"/>
        <end position="379"/>
    </location>
</feature>
<feature type="region of interest" description="EPSP synthase">
    <location>
        <begin position="392"/>
        <end position="837"/>
    </location>
</feature>
<feature type="region of interest" description="Shikimate kinase">
    <location>
        <begin position="857"/>
        <end position="1047"/>
    </location>
</feature>
<feature type="region of interest" description="3-dehydroquinase">
    <location>
        <begin position="1048"/>
        <end position="1257"/>
    </location>
</feature>
<feature type="region of interest" description="Shikimate dehydrogenase">
    <location>
        <begin position="1270"/>
        <end position="1550"/>
    </location>
</feature>
<feature type="active site" description="Proton acceptor; for 3-dehydroquinate synthase activity" evidence="1">
    <location>
        <position position="253"/>
    </location>
</feature>
<feature type="active site" description="Proton acceptor; for 3-dehydroquinate synthase activity" evidence="1">
    <location>
        <position position="268"/>
    </location>
</feature>
<feature type="active site" description="Schiff-base intermediate with substrate; for 3-dehydroquinate dehydratase activity" evidence="1">
    <location>
        <position position="1193"/>
    </location>
</feature>
<feature type="binding site" evidence="1">
    <location>
        <begin position="42"/>
        <end position="44"/>
    </location>
    <ligand>
        <name>NAD(+)</name>
        <dbReference type="ChEBI" id="CHEBI:57540"/>
    </ligand>
</feature>
<feature type="binding site" evidence="1">
    <location>
        <begin position="80"/>
        <end position="83"/>
    </location>
    <ligand>
        <name>NAD(+)</name>
        <dbReference type="ChEBI" id="CHEBI:57540"/>
    </ligand>
</feature>
<feature type="binding site" evidence="1">
    <location>
        <begin position="111"/>
        <end position="113"/>
    </location>
    <ligand>
        <name>NAD(+)</name>
        <dbReference type="ChEBI" id="CHEBI:57540"/>
    </ligand>
</feature>
<feature type="binding site" evidence="1">
    <location>
        <position position="116"/>
    </location>
    <ligand>
        <name>NAD(+)</name>
        <dbReference type="ChEBI" id="CHEBI:57540"/>
    </ligand>
</feature>
<feature type="binding site" evidence="1">
    <location>
        <position position="127"/>
    </location>
    <ligand>
        <name>7-phospho-2-dehydro-3-deoxy-D-arabino-heptonate</name>
        <dbReference type="ChEBI" id="CHEBI:58394"/>
    </ligand>
</feature>
<feature type="binding site" evidence="1">
    <location>
        <begin position="136"/>
        <end position="137"/>
    </location>
    <ligand>
        <name>NAD(+)</name>
        <dbReference type="ChEBI" id="CHEBI:57540"/>
    </ligand>
</feature>
<feature type="binding site" evidence="1">
    <location>
        <position position="143"/>
    </location>
    <ligand>
        <name>7-phospho-2-dehydro-3-deoxy-D-arabino-heptonate</name>
        <dbReference type="ChEBI" id="CHEBI:58394"/>
    </ligand>
</feature>
<feature type="binding site" evidence="1">
    <location>
        <position position="149"/>
    </location>
    <ligand>
        <name>7-phospho-2-dehydro-3-deoxy-D-arabino-heptonate</name>
        <dbReference type="ChEBI" id="CHEBI:58394"/>
    </ligand>
</feature>
<feature type="binding site" evidence="1">
    <location>
        <position position="158"/>
    </location>
    <ligand>
        <name>NAD(+)</name>
        <dbReference type="ChEBI" id="CHEBI:57540"/>
    </ligand>
</feature>
<feature type="binding site" evidence="1">
    <location>
        <position position="159"/>
    </location>
    <ligand>
        <name>7-phospho-2-dehydro-3-deoxy-D-arabino-heptonate</name>
        <dbReference type="ChEBI" id="CHEBI:58394"/>
    </ligand>
</feature>
<feature type="binding site" evidence="1">
    <location>
        <begin position="176"/>
        <end position="179"/>
    </location>
    <ligand>
        <name>NAD(+)</name>
        <dbReference type="ChEBI" id="CHEBI:57540"/>
    </ligand>
</feature>
<feature type="binding site" evidence="1">
    <location>
        <position position="187"/>
    </location>
    <ligand>
        <name>NAD(+)</name>
        <dbReference type="ChEBI" id="CHEBI:57540"/>
    </ligand>
</feature>
<feature type="binding site" evidence="1">
    <location>
        <begin position="191"/>
        <end position="194"/>
    </location>
    <ligand>
        <name>7-phospho-2-dehydro-3-deoxy-D-arabino-heptonate</name>
        <dbReference type="ChEBI" id="CHEBI:58394"/>
    </ligand>
</feature>
<feature type="binding site" evidence="1">
    <location>
        <position position="191"/>
    </location>
    <ligand>
        <name>Zn(2+)</name>
        <dbReference type="ChEBI" id="CHEBI:29105"/>
        <note>catalytic</note>
    </ligand>
</feature>
<feature type="binding site" evidence="1">
    <location>
        <position position="243"/>
    </location>
    <ligand>
        <name>7-phospho-2-dehydro-3-deoxy-D-arabino-heptonate</name>
        <dbReference type="ChEBI" id="CHEBI:58394"/>
    </ligand>
</feature>
<feature type="binding site" evidence="1">
    <location>
        <begin position="257"/>
        <end position="261"/>
    </location>
    <ligand>
        <name>7-phospho-2-dehydro-3-deoxy-D-arabino-heptonate</name>
        <dbReference type="ChEBI" id="CHEBI:58394"/>
    </ligand>
</feature>
<feature type="binding site" evidence="1">
    <location>
        <position position="264"/>
    </location>
    <ligand>
        <name>7-phospho-2-dehydro-3-deoxy-D-arabino-heptonate</name>
        <dbReference type="ChEBI" id="CHEBI:58394"/>
    </ligand>
</feature>
<feature type="binding site" evidence="1">
    <location>
        <position position="264"/>
    </location>
    <ligand>
        <name>Zn(2+)</name>
        <dbReference type="ChEBI" id="CHEBI:29105"/>
        <note>catalytic</note>
    </ligand>
</feature>
<feature type="binding site" evidence="1">
    <location>
        <position position="280"/>
    </location>
    <ligand>
        <name>7-phospho-2-dehydro-3-deoxy-D-arabino-heptonate</name>
        <dbReference type="ChEBI" id="CHEBI:58394"/>
    </ligand>
</feature>
<feature type="binding site" evidence="1">
    <location>
        <position position="280"/>
    </location>
    <ligand>
        <name>Zn(2+)</name>
        <dbReference type="ChEBI" id="CHEBI:29105"/>
        <note>catalytic</note>
    </ligand>
</feature>
<feature type="binding site" evidence="1">
    <location>
        <position position="351"/>
    </location>
    <ligand>
        <name>7-phospho-2-dehydro-3-deoxy-D-arabino-heptonate</name>
        <dbReference type="ChEBI" id="CHEBI:58394"/>
    </ligand>
</feature>
<feature type="binding site" evidence="1">
    <location>
        <begin position="864"/>
        <end position="871"/>
    </location>
    <ligand>
        <name>ATP</name>
        <dbReference type="ChEBI" id="CHEBI:30616"/>
    </ligand>
</feature>
<protein>
    <recommendedName>
        <fullName evidence="1">Pentafunctional AROM polypeptide</fullName>
    </recommendedName>
    <domain>
        <recommendedName>
            <fullName evidence="1">3-dehydroquinate synthase</fullName>
            <shortName evidence="1">DHQS</shortName>
            <ecNumber evidence="1">4.2.3.4</ecNumber>
        </recommendedName>
    </domain>
    <domain>
        <recommendedName>
            <fullName evidence="1">3-phosphoshikimate 1-carboxyvinyltransferase</fullName>
            <ecNumber evidence="1">2.5.1.19</ecNumber>
        </recommendedName>
        <alternativeName>
            <fullName evidence="1">5-enolpyruvylshikimate-3-phosphate synthase</fullName>
            <shortName evidence="1">EPSP synthase</shortName>
            <shortName evidence="1">EPSPS</shortName>
        </alternativeName>
    </domain>
    <domain>
        <recommendedName>
            <fullName evidence="1">Shikimate kinase</fullName>
            <shortName evidence="1">SK</shortName>
            <ecNumber evidence="1">2.7.1.71</ecNumber>
        </recommendedName>
    </domain>
    <domain>
        <recommendedName>
            <fullName evidence="1">3-dehydroquinate dehydratase</fullName>
            <shortName evidence="1">3-dehydroquinase</shortName>
            <ecNumber evidence="1">4.2.1.10</ecNumber>
        </recommendedName>
    </domain>
    <domain>
        <recommendedName>
            <fullName evidence="1">Shikimate dehydrogenase</fullName>
            <ecNumber evidence="1">1.1.1.25</ecNumber>
        </recommendedName>
    </domain>
</protein>
<gene>
    <name evidence="1" type="primary">ARO1</name>
    <name type="ORF">CD36_40930</name>
</gene>
<sequence>MSIERVPILGKETIHVGYGIADHIVNEVIANLASSTYVIVTDTNMARTPQYSKLTDDFKTNLSKKRPESRLLTYCVSPGENNKNRVTKAAVEDFLLQQGCTRDTVILAVGGGVIGDMIGFVAATFMRGVRVVQVPTTLLAMVDSSVGGKTAIDTPLGKNFIGAFHQPEYVFCDVSFLETLPARQFINGMAEVVKTAAIWNEEEFTRLENFSKKFLSVVTSKKPDLQSIKAELVKTVLESVRVKAGVVSSDEKEAGLRNLLNFGHTIGHAIEAVLTPEALHGECVSIGMIKEAELSRYLGILPPVAVARLSKCLVAYGLPVSIDDKEFLKKVGPKRHYVEIDILLKKMAIDKKNDGSKIRCVLLEKIGKCYQLKAHQVSKQDLSFVLTDEVLVHPFTNPPKENIIVPPGSKSISNRALILAALGNGTVRVKNLLHSDDTKHMLDAVASLKGAEISTEDNGETIVVKGNGGNLVTCGEELYLGNAGTASRFLTTVASLVGKSPASDDVILTGNARMQERPIGPLVDALRSNGSEIEYLNKQGSLPLKISAGNGLKGGRIELAATISSQYVSSILMCAPYAKEPVTLALVGGKPISQLYIDMTCAMMKSFGIEVTKSTTEEYTYHIPKGIYKNPTEYVIESDASSATYPLAFAAMTGTSCTIPNIGSSSLQGDARFAVDVLKPMGCKVEQTATSTTVTGPPRGHLKPLPHVDMEPMTDAFLTASVVAAVAKGGSTSITGIANQRVKECNRIEAMVTELAKFGVSANELPDGIEIHGIDIKDLKTPEISDRGVCSYDDHRVAMSFSLLAGLCKEPVLILERSTTGKTWPGWWDILHSKFKIELDGYEPPFNTDKHVIKSSDKGVIVIGMRGTGKSTLSEWLASFLGFKMLDMDKYLEEKLGTDIKSLIKAKGWEHFRKEEAIVAKECFTKFSKGYVLSTGGGIVEGEDARQQLKSYADNGGIVLHLHRDLDETVTFLAADTTRPAYSSEVQEVWLRREKWYHECSNYHFYSSHCSTEDEFNHLRKSFVNYIKLITGAERSVVPTGRSTAVVLTLPDLNNVAGDLESITIGADAVELRVDLLKDTSAAFVAAQIATTRKHADLPIIYTVRTVSQGGKFPDENVDELKSLLLLGIRLGVAYIDLQLTAPNELIEEISSKKGFTRIIGTYQDINGELKWNNVEWKNKYNQGVSMNADIVRLVGRANSIQDNLDLEDFKKQNTLKPLIAFNLGTQGKLSQVLNGTFTPISHQLLPNDDGLLTIGEINQTYFDIGGFTAKKFWVIGSPIEHSRSPNLHNAGYKALNLPYQFGRFEATDVDVVYDNLINKSDFGGLAITMPLKLDIMKFATKLSDAAETIGAVNTLIPVEGGYFGDNTDWVGISNSFIRAGVPPKSSSNGLVVGAGGTSRAAIYALHQMGCTKIYLVNRTVAKLEELVKSFPKDYNLEIVETEQQADKVNKVLLAVSCIPADKPLDSDVLKKIERILSNGSEQVAGFKPTLLEASYKPRVTPIMKLAEEQYKWKVIPGVEMLVNQGDRQFKLHTGFSAPYEIIHRAVVEE</sequence>
<reference key="1">
    <citation type="journal article" date="2009" name="Genome Res.">
        <title>Comparative genomics of the fungal pathogens Candida dubliniensis and Candida albicans.</title>
        <authorList>
            <person name="Jackson A.P."/>
            <person name="Gamble J.A."/>
            <person name="Yeomans T."/>
            <person name="Moran G.P."/>
            <person name="Saunders D."/>
            <person name="Harris D."/>
            <person name="Aslett M."/>
            <person name="Barrell J.F."/>
            <person name="Butler G."/>
            <person name="Citiulo F."/>
            <person name="Coleman D.C."/>
            <person name="de Groot P.W.J."/>
            <person name="Goodwin T.J."/>
            <person name="Quail M.A."/>
            <person name="McQuillan J."/>
            <person name="Munro C.A."/>
            <person name="Pain A."/>
            <person name="Poulter R.T."/>
            <person name="Rajandream M.A."/>
            <person name="Renauld H."/>
            <person name="Spiering M.J."/>
            <person name="Tivey A."/>
            <person name="Gow N.A.R."/>
            <person name="Barrell B."/>
            <person name="Sullivan D.J."/>
            <person name="Berriman M."/>
        </authorList>
    </citation>
    <scope>NUCLEOTIDE SEQUENCE [LARGE SCALE GENOMIC DNA]</scope>
    <source>
        <strain>CD36 / ATCC MYA-646 / CBS 7987 / NCPF 3949 / NRRL Y-17841</strain>
    </source>
</reference>